<protein>
    <recommendedName>
        <fullName>Tektin-1</fullName>
    </recommendedName>
</protein>
<feature type="chain" id="PRO_0000261166" description="Tektin-1">
    <location>
        <begin position="1"/>
        <end position="418"/>
    </location>
</feature>
<feature type="region of interest" description="Disordered" evidence="3">
    <location>
        <begin position="399"/>
        <end position="418"/>
    </location>
</feature>
<feature type="coiled-coil region" evidence="2">
    <location>
        <begin position="21"/>
        <end position="84"/>
    </location>
</feature>
<feature type="coiled-coil region" evidence="2">
    <location>
        <begin position="268"/>
        <end position="308"/>
    </location>
</feature>
<feature type="coiled-coil region" evidence="2">
    <location>
        <begin position="336"/>
        <end position="383"/>
    </location>
</feature>
<evidence type="ECO:0000250" key="1">
    <source>
        <dbReference type="UniProtKB" id="Q9DAJ2"/>
    </source>
</evidence>
<evidence type="ECO:0000255" key="2"/>
<evidence type="ECO:0000256" key="3">
    <source>
        <dbReference type="SAM" id="MobiDB-lite"/>
    </source>
</evidence>
<evidence type="ECO:0000269" key="4">
    <source>
    </source>
</evidence>
<evidence type="ECO:0000269" key="5">
    <source>
    </source>
</evidence>
<evidence type="ECO:0000305" key="6"/>
<evidence type="ECO:0007744" key="7">
    <source>
        <dbReference type="PDB" id="7RRO"/>
    </source>
</evidence>
<evidence type="ECO:0007744" key="8">
    <source>
        <dbReference type="PDB" id="8OTZ"/>
    </source>
</evidence>
<name>TEKT1_BOVIN</name>
<gene>
    <name type="primary">TEKT1</name>
</gene>
<comment type="function">
    <text evidence="4 5">Microtubule inner protein (MIP) part of the dynein-decorated doublet microtubules (DMTs) in cilia and flagellar axoneme (PubMed:34715025, PubMed:37327785). Forms filamentous polymers in the walls of ciliary and flagellar microtubules (PubMed:34715025).</text>
</comment>
<comment type="subunit">
    <text evidence="5">Microtubule inner protein component of sperm flagellar doublet microtubules.</text>
</comment>
<comment type="subcellular location">
    <subcellularLocation>
        <location evidence="4">Cytoplasm</location>
        <location evidence="4">Cytoskeleton</location>
        <location evidence="4">Cilium axoneme</location>
    </subcellularLocation>
    <subcellularLocation>
        <location evidence="4 5">Cytoplasm</location>
        <location evidence="4 5">Cytoskeleton</location>
        <location evidence="4 5">Flagellum axoneme</location>
    </subcellularLocation>
</comment>
<comment type="tissue specificity">
    <text evidence="4">Expressed in trachea multiciliated cells.</text>
</comment>
<comment type="PTM">
    <text evidence="1">Ubiquitinated, leading to its degradation. Deubiquitinated by USP16, promoting its stability.</text>
</comment>
<comment type="similarity">
    <text evidence="6">Belongs to the tektin family.</text>
</comment>
<reference key="1">
    <citation type="submission" date="2005-11" db="EMBL/GenBank/DDBJ databases">
        <authorList>
            <consortium name="NIH - Mammalian Gene Collection (MGC) project"/>
        </authorList>
    </citation>
    <scope>NUCLEOTIDE SEQUENCE [LARGE SCALE MRNA]</scope>
    <source>
        <strain>Crossbred X Angus</strain>
        <tissue>Liver</tissue>
    </source>
</reference>
<reference evidence="7" key="2">
    <citation type="journal article" date="2021" name="Cell">
        <title>De novo identification of mammalian ciliary motility proteins using cryo-EM.</title>
        <authorList>
            <person name="Gui M."/>
            <person name="Farley H."/>
            <person name="Anujan P."/>
            <person name="Anderson J.R."/>
            <person name="Maxwell D.W."/>
            <person name="Whitchurch J.B."/>
            <person name="Botsch J.J."/>
            <person name="Qiu T."/>
            <person name="Meleppattu S."/>
            <person name="Singh S.K."/>
            <person name="Zhang Q."/>
            <person name="Thompson J."/>
            <person name="Lucas J.S."/>
            <person name="Bingle C.D."/>
            <person name="Norris D.P."/>
            <person name="Roy S."/>
            <person name="Brown A."/>
        </authorList>
    </citation>
    <scope>STRUCTURE BY ELECTRON MICROSCOPY (3.40 ANGSTROMS)</scope>
    <scope>FUNCTION</scope>
    <scope>SUBCELLULAR LOCATION</scope>
    <scope>TISSUE SPECIFICITY</scope>
</reference>
<reference evidence="8" key="3">
    <citation type="journal article" date="2023" name="Cell">
        <title>Structural specializations of the sperm tail.</title>
        <authorList>
            <person name="Leung M.R."/>
            <person name="Zeng J."/>
            <person name="Wang X."/>
            <person name="Roelofs M.C."/>
            <person name="Huang W."/>
            <person name="Zenezini Chiozzi R."/>
            <person name="Hevler J.F."/>
            <person name="Heck A.J.R."/>
            <person name="Dutcher S.K."/>
            <person name="Brown A."/>
            <person name="Zhang R."/>
            <person name="Zeev-Ben-Mordehai T."/>
        </authorList>
    </citation>
    <scope>STRUCTURE BY ELECTRON MICROSCOPY (3.60 ANGSTROMS)</scope>
    <scope>FUNCTION</scope>
    <scope>SUBUNIT</scope>
    <scope>SUBCELLULAR LOCATION</scope>
</reference>
<proteinExistence type="evidence at protein level"/>
<sequence>MAKLLQQPPKFLRAEWQIANKNQYHRAEAQRSRSERLVAESQRLVDEIEKTTRKSQSDVNKKLEQRLEEVRFWKKELDDKLEQLVYATEDLLLYQTRLQKALESFKEPLHITEKCLEYREKRVGIDLVHDEVEQELIKEHEIIRGVMTLLTRTLEETCEQIRLNRSAKYNLEKDLRDKFTAITIDDICFSLNNNSPNIKYSENVVRVEPNSVSLEDWLDFSNTNVEKADKQRNNSLTLKALVDRILFQTASDLRRQCDVVDTAFKNGLKETKDARDKLALHLDKVMEEIASQEKNIVVLEKAILDQEGPAKVAHTRLETRTHRPNVELCRDVAQYRLIKEVDEITHNVARLKETLAQAHVELKGLNRRQLALQEEIQIKENTIYIDEVLCVPMRKSIPPRDGDDHGEWAGGSHPEAVC</sequence>
<dbReference type="EMBL" id="BC109833">
    <property type="protein sequence ID" value="AAI09834.1"/>
    <property type="molecule type" value="mRNA"/>
</dbReference>
<dbReference type="RefSeq" id="NP_001069251.1">
    <property type="nucleotide sequence ID" value="NM_001075783.2"/>
</dbReference>
<dbReference type="PDB" id="7RRO">
    <property type="method" value="EM"/>
    <property type="resolution" value="3.40 A"/>
    <property type="chains" value="A0/A1/A2/A3/A4=1-418"/>
</dbReference>
<dbReference type="PDB" id="8OTZ">
    <property type="method" value="EM"/>
    <property type="resolution" value="3.60 A"/>
    <property type="chains" value="Cm/Cn/Co/Cp=1-418"/>
</dbReference>
<dbReference type="PDB" id="9CPB">
    <property type="method" value="EM"/>
    <property type="resolution" value="3.52 A"/>
    <property type="chains" value="5L/5M/5N/5O=1-418"/>
</dbReference>
<dbReference type="PDBsum" id="7RRO"/>
<dbReference type="PDBsum" id="8OTZ"/>
<dbReference type="PDBsum" id="9CPB"/>
<dbReference type="EMDB" id="EMD-17187"/>
<dbReference type="EMDB" id="EMD-24664"/>
<dbReference type="EMDB" id="EMD-45801"/>
<dbReference type="EMDB" id="EMD-50664"/>
<dbReference type="SMR" id="Q32KZ9"/>
<dbReference type="FunCoup" id="Q32KZ9">
    <property type="interactions" value="175"/>
</dbReference>
<dbReference type="STRING" id="9913.ENSBTAP00000009779"/>
<dbReference type="PaxDb" id="9913-ENSBTAP00000009779"/>
<dbReference type="GeneID" id="519068"/>
<dbReference type="KEGG" id="bta:519068"/>
<dbReference type="CTD" id="83659"/>
<dbReference type="VEuPathDB" id="HostDB:ENSBTAG00000007437"/>
<dbReference type="eggNOG" id="KOG2685">
    <property type="taxonomic scope" value="Eukaryota"/>
</dbReference>
<dbReference type="HOGENOM" id="CLU_033588_2_2_1"/>
<dbReference type="InParanoid" id="Q32KZ9"/>
<dbReference type="OMA" id="LAMVMDE"/>
<dbReference type="OrthoDB" id="10054259at2759"/>
<dbReference type="TreeFam" id="TF320754"/>
<dbReference type="Proteomes" id="UP000009136">
    <property type="component" value="Chromosome 19"/>
</dbReference>
<dbReference type="Bgee" id="ENSBTAG00000007437">
    <property type="expression patterns" value="Expressed in oviduct epithelium and 59 other cell types or tissues"/>
</dbReference>
<dbReference type="GO" id="GO:0160111">
    <property type="term" value="C:axonemal A tubule inner sheath"/>
    <property type="evidence" value="ECO:0000250"/>
    <property type="project" value="UniProtKB"/>
</dbReference>
<dbReference type="GO" id="GO:0005879">
    <property type="term" value="C:axonemal microtubule"/>
    <property type="evidence" value="ECO:0000314"/>
    <property type="project" value="UniProtKB"/>
</dbReference>
<dbReference type="GO" id="GO:0015630">
    <property type="term" value="C:microtubule cytoskeleton"/>
    <property type="evidence" value="ECO:0000318"/>
    <property type="project" value="GO_Central"/>
</dbReference>
<dbReference type="GO" id="GO:0036126">
    <property type="term" value="C:sperm flagellum"/>
    <property type="evidence" value="ECO:0000250"/>
    <property type="project" value="UniProtKB"/>
</dbReference>
<dbReference type="GO" id="GO:0060271">
    <property type="term" value="P:cilium assembly"/>
    <property type="evidence" value="ECO:0000318"/>
    <property type="project" value="GO_Central"/>
</dbReference>
<dbReference type="GO" id="GO:0060294">
    <property type="term" value="P:cilium movement involved in cell motility"/>
    <property type="evidence" value="ECO:0000318"/>
    <property type="project" value="GO_Central"/>
</dbReference>
<dbReference type="GO" id="GO:0030317">
    <property type="term" value="P:flagellated sperm motility"/>
    <property type="evidence" value="ECO:0000250"/>
    <property type="project" value="UniProtKB"/>
</dbReference>
<dbReference type="InterPro" id="IPR048256">
    <property type="entry name" value="Tektin-like"/>
</dbReference>
<dbReference type="InterPro" id="IPR000435">
    <property type="entry name" value="Tektins"/>
</dbReference>
<dbReference type="PANTHER" id="PTHR19960">
    <property type="entry name" value="TEKTIN"/>
    <property type="match status" value="1"/>
</dbReference>
<dbReference type="PANTHER" id="PTHR19960:SF25">
    <property type="entry name" value="TEKTIN-1"/>
    <property type="match status" value="1"/>
</dbReference>
<dbReference type="Pfam" id="PF03148">
    <property type="entry name" value="Tektin"/>
    <property type="match status" value="1"/>
</dbReference>
<dbReference type="PRINTS" id="PR00511">
    <property type="entry name" value="TEKTIN"/>
</dbReference>
<accession>Q32KZ9</accession>
<organism>
    <name type="scientific">Bos taurus</name>
    <name type="common">Bovine</name>
    <dbReference type="NCBI Taxonomy" id="9913"/>
    <lineage>
        <taxon>Eukaryota</taxon>
        <taxon>Metazoa</taxon>
        <taxon>Chordata</taxon>
        <taxon>Craniata</taxon>
        <taxon>Vertebrata</taxon>
        <taxon>Euteleostomi</taxon>
        <taxon>Mammalia</taxon>
        <taxon>Eutheria</taxon>
        <taxon>Laurasiatheria</taxon>
        <taxon>Artiodactyla</taxon>
        <taxon>Ruminantia</taxon>
        <taxon>Pecora</taxon>
        <taxon>Bovidae</taxon>
        <taxon>Bovinae</taxon>
        <taxon>Bos</taxon>
    </lineage>
</organism>
<keyword id="KW-0002">3D-structure</keyword>
<keyword id="KW-0966">Cell projection</keyword>
<keyword id="KW-0969">Cilium</keyword>
<keyword id="KW-0175">Coiled coil</keyword>
<keyword id="KW-0963">Cytoplasm</keyword>
<keyword id="KW-0206">Cytoskeleton</keyword>
<keyword id="KW-0282">Flagellum</keyword>
<keyword id="KW-0493">Microtubule</keyword>
<keyword id="KW-1185">Reference proteome</keyword>
<keyword id="KW-0832">Ubl conjugation</keyword>